<evidence type="ECO:0000250" key="1"/>
<evidence type="ECO:0000305" key="2"/>
<dbReference type="EC" id="2.7.7.1"/>
<dbReference type="EMBL" id="AE000782">
    <property type="protein sequence ID" value="AAB88941.1"/>
    <property type="molecule type" value="Genomic_DNA"/>
</dbReference>
<dbReference type="PIR" id="C69539">
    <property type="entry name" value="C69539"/>
</dbReference>
<dbReference type="RefSeq" id="WP_010879804.1">
    <property type="nucleotide sequence ID" value="NC_000917.1"/>
</dbReference>
<dbReference type="SMR" id="O27969"/>
<dbReference type="STRING" id="224325.AF_2315"/>
<dbReference type="PaxDb" id="224325-AF_2315"/>
<dbReference type="EnsemblBacteria" id="AAB88941">
    <property type="protein sequence ID" value="AAB88941"/>
    <property type="gene ID" value="AF_2315"/>
</dbReference>
<dbReference type="KEGG" id="afu:AF_2315"/>
<dbReference type="eggNOG" id="arCOG00972">
    <property type="taxonomic scope" value="Archaea"/>
</dbReference>
<dbReference type="HOGENOM" id="CLU_108783_0_0_2"/>
<dbReference type="OrthoDB" id="264480at2157"/>
<dbReference type="PhylomeDB" id="O27969"/>
<dbReference type="UniPathway" id="UPA00253">
    <property type="reaction ID" value="UER00600"/>
</dbReference>
<dbReference type="Proteomes" id="UP000002199">
    <property type="component" value="Chromosome"/>
</dbReference>
<dbReference type="GO" id="GO:0005737">
    <property type="term" value="C:cytoplasm"/>
    <property type="evidence" value="ECO:0007669"/>
    <property type="project" value="UniProtKB-SubCell"/>
</dbReference>
<dbReference type="GO" id="GO:0005524">
    <property type="term" value="F:ATP binding"/>
    <property type="evidence" value="ECO:0007669"/>
    <property type="project" value="UniProtKB-KW"/>
</dbReference>
<dbReference type="GO" id="GO:0000309">
    <property type="term" value="F:nicotinamide-nucleotide adenylyltransferase activity"/>
    <property type="evidence" value="ECO:0007669"/>
    <property type="project" value="UniProtKB-UniRule"/>
</dbReference>
<dbReference type="GO" id="GO:0009435">
    <property type="term" value="P:NAD biosynthetic process"/>
    <property type="evidence" value="ECO:0007669"/>
    <property type="project" value="UniProtKB-UniRule"/>
</dbReference>
<dbReference type="CDD" id="cd02166">
    <property type="entry name" value="NMNAT_Archaea"/>
    <property type="match status" value="1"/>
</dbReference>
<dbReference type="Gene3D" id="3.40.50.620">
    <property type="entry name" value="HUPs"/>
    <property type="match status" value="1"/>
</dbReference>
<dbReference type="HAMAP" id="MF_00243">
    <property type="entry name" value="NMN_adenylyltr"/>
    <property type="match status" value="1"/>
</dbReference>
<dbReference type="InterPro" id="IPR004821">
    <property type="entry name" value="Cyt_trans-like"/>
</dbReference>
<dbReference type="InterPro" id="IPR006418">
    <property type="entry name" value="NMN_Atrans_arc"/>
</dbReference>
<dbReference type="InterPro" id="IPR014729">
    <property type="entry name" value="Rossmann-like_a/b/a_fold"/>
</dbReference>
<dbReference type="NCBIfam" id="TIGR01527">
    <property type="entry name" value="arch_NMN_Atrans"/>
    <property type="match status" value="1"/>
</dbReference>
<dbReference type="NCBIfam" id="TIGR00125">
    <property type="entry name" value="cyt_tran_rel"/>
    <property type="match status" value="1"/>
</dbReference>
<dbReference type="NCBIfam" id="NF002243">
    <property type="entry name" value="PRK01153.1"/>
    <property type="match status" value="1"/>
</dbReference>
<dbReference type="PANTHER" id="PTHR21342:SF0">
    <property type="entry name" value="BIFUNCTIONAL NMN ADENYLYLTRANSFERASE_NUDIX HYDROLASE"/>
    <property type="match status" value="1"/>
</dbReference>
<dbReference type="PANTHER" id="PTHR21342">
    <property type="entry name" value="PHOSPHOPANTETHEINE ADENYLYLTRANSFERASE"/>
    <property type="match status" value="1"/>
</dbReference>
<dbReference type="Pfam" id="PF01467">
    <property type="entry name" value="CTP_transf_like"/>
    <property type="match status" value="1"/>
</dbReference>
<dbReference type="SUPFAM" id="SSF52374">
    <property type="entry name" value="Nucleotidylyl transferase"/>
    <property type="match status" value="1"/>
</dbReference>
<protein>
    <recommendedName>
        <fullName>Nicotinamide-nucleotide adenylyltransferase</fullName>
        <ecNumber>2.7.7.1</ecNumber>
    </recommendedName>
    <alternativeName>
        <fullName>NAD(+) diphosphorylase</fullName>
    </alternativeName>
    <alternativeName>
        <fullName>NAD(+) pyrophosphorylase</fullName>
    </alternativeName>
    <alternativeName>
        <fullName>NMN adenylyltransferase</fullName>
    </alternativeName>
</protein>
<proteinExistence type="inferred from homology"/>
<sequence length="174" mass="20381">MRAFFVGRFQPYHLGHHEVVKNVLQKVDELIIGIGSAQESHSLENPFTAGERVLMIDRAVDEIKRELGIDKKVYIIPLEDIYRNSLWVAHVCSMVPPFDVVYTNNPLVYRLFKEAGFKVMHTKMYNRNEYHGTEIRRKMLEGEDWEKYVPESVAEIIKEIDGIKRLRDISGRDF</sequence>
<accession>O27969</accession>
<feature type="chain" id="PRO_0000134988" description="Nicotinamide-nucleotide adenylyltransferase">
    <location>
        <begin position="1"/>
        <end position="174"/>
    </location>
</feature>
<organism>
    <name type="scientific">Archaeoglobus fulgidus (strain ATCC 49558 / DSM 4304 / JCM 9628 / NBRC 100126 / VC-16)</name>
    <dbReference type="NCBI Taxonomy" id="224325"/>
    <lineage>
        <taxon>Archaea</taxon>
        <taxon>Methanobacteriati</taxon>
        <taxon>Methanobacteriota</taxon>
        <taxon>Archaeoglobi</taxon>
        <taxon>Archaeoglobales</taxon>
        <taxon>Archaeoglobaceae</taxon>
        <taxon>Archaeoglobus</taxon>
    </lineage>
</organism>
<comment type="catalytic activity">
    <reaction>
        <text>beta-nicotinamide D-ribonucleotide + ATP + H(+) = diphosphate + NAD(+)</text>
        <dbReference type="Rhea" id="RHEA:21360"/>
        <dbReference type="ChEBI" id="CHEBI:14649"/>
        <dbReference type="ChEBI" id="CHEBI:15378"/>
        <dbReference type="ChEBI" id="CHEBI:30616"/>
        <dbReference type="ChEBI" id="CHEBI:33019"/>
        <dbReference type="ChEBI" id="CHEBI:57540"/>
        <dbReference type="EC" id="2.7.7.1"/>
    </reaction>
</comment>
<comment type="pathway">
    <text>Cofactor biosynthesis; NAD(+) biosynthesis; NAD(+) from nicotinamide D-ribonucleotide: step 1/1.</text>
</comment>
<comment type="subcellular location">
    <subcellularLocation>
        <location evidence="1">Cytoplasm</location>
    </subcellularLocation>
</comment>
<comment type="similarity">
    <text evidence="2">Belongs to the archaeal NMN adenylyltransferase family.</text>
</comment>
<reference key="1">
    <citation type="journal article" date="1997" name="Nature">
        <title>The complete genome sequence of the hyperthermophilic, sulphate-reducing archaeon Archaeoglobus fulgidus.</title>
        <authorList>
            <person name="Klenk H.-P."/>
            <person name="Clayton R.A."/>
            <person name="Tomb J.-F."/>
            <person name="White O."/>
            <person name="Nelson K.E."/>
            <person name="Ketchum K.A."/>
            <person name="Dodson R.J."/>
            <person name="Gwinn M.L."/>
            <person name="Hickey E.K."/>
            <person name="Peterson J.D."/>
            <person name="Richardson D.L."/>
            <person name="Kerlavage A.R."/>
            <person name="Graham D.E."/>
            <person name="Kyrpides N.C."/>
            <person name="Fleischmann R.D."/>
            <person name="Quackenbush J."/>
            <person name="Lee N.H."/>
            <person name="Sutton G.G."/>
            <person name="Gill S.R."/>
            <person name="Kirkness E.F."/>
            <person name="Dougherty B.A."/>
            <person name="McKenney K."/>
            <person name="Adams M.D."/>
            <person name="Loftus B.J."/>
            <person name="Peterson S.N."/>
            <person name="Reich C.I."/>
            <person name="McNeil L.K."/>
            <person name="Badger J.H."/>
            <person name="Glodek A."/>
            <person name="Zhou L."/>
            <person name="Overbeek R."/>
            <person name="Gocayne J.D."/>
            <person name="Weidman J.F."/>
            <person name="McDonald L.A."/>
            <person name="Utterback T.R."/>
            <person name="Cotton M.D."/>
            <person name="Spriggs T."/>
            <person name="Artiach P."/>
            <person name="Kaine B.P."/>
            <person name="Sykes S.M."/>
            <person name="Sadow P.W."/>
            <person name="D'Andrea K.P."/>
            <person name="Bowman C."/>
            <person name="Fujii C."/>
            <person name="Garland S.A."/>
            <person name="Mason T.M."/>
            <person name="Olsen G.J."/>
            <person name="Fraser C.M."/>
            <person name="Smith H.O."/>
            <person name="Woese C.R."/>
            <person name="Venter J.C."/>
        </authorList>
    </citation>
    <scope>NUCLEOTIDE SEQUENCE [LARGE SCALE GENOMIC DNA]</scope>
    <source>
        <strain>ATCC 49558 / DSM 4304 / JCM 9628 / NBRC 100126 / VC-16</strain>
    </source>
</reference>
<name>NADM_ARCFU</name>
<gene>
    <name type="ordered locus">AF_2315</name>
</gene>
<keyword id="KW-0067">ATP-binding</keyword>
<keyword id="KW-0963">Cytoplasm</keyword>
<keyword id="KW-0520">NAD</keyword>
<keyword id="KW-0547">Nucleotide-binding</keyword>
<keyword id="KW-0548">Nucleotidyltransferase</keyword>
<keyword id="KW-0662">Pyridine nucleotide biosynthesis</keyword>
<keyword id="KW-1185">Reference proteome</keyword>
<keyword id="KW-0808">Transferase</keyword>